<organism>
    <name type="scientific">Xenopus laevis</name>
    <name type="common">African clawed frog</name>
    <dbReference type="NCBI Taxonomy" id="8355"/>
    <lineage>
        <taxon>Eukaryota</taxon>
        <taxon>Metazoa</taxon>
        <taxon>Chordata</taxon>
        <taxon>Craniata</taxon>
        <taxon>Vertebrata</taxon>
        <taxon>Euteleostomi</taxon>
        <taxon>Amphibia</taxon>
        <taxon>Batrachia</taxon>
        <taxon>Anura</taxon>
        <taxon>Pipoidea</taxon>
        <taxon>Pipidae</taxon>
        <taxon>Xenopodinae</taxon>
        <taxon>Xenopus</taxon>
        <taxon>Xenopus</taxon>
    </lineage>
</organism>
<comment type="function">
    <text evidence="1 2">Guanine nucleotide exchange factor (GEF) regulating clathrin-mediated endocytosis through RAB35 activation. Promotes the exchange of GDP to GTP, converting inactive GDP-bound RAB35 into its active GTP-bound form. Regulates clathrin-mediated endocytosis of synaptic vesicles and mediates exit from early endosomes. Binds phosphatidylinositol-phosphates (PtdInsPs), with some preference for PtdIns(3)P.</text>
</comment>
<comment type="subcellular location">
    <subcellularLocation>
        <location evidence="1">Cytoplasmic vesicle</location>
        <location evidence="1">Clathrin-coated vesicle membrane</location>
        <topology evidence="1">Peripheral membrane protein</topology>
    </subcellularLocation>
    <subcellularLocation>
        <location evidence="1">Presynaptic cell membrane</location>
    </subcellularLocation>
    <text evidence="1">Associates to membranes via lipid-binding activity.</text>
</comment>
<feature type="chain" id="PRO_0000342622" description="DENN domain-containing protein 1A">
    <location>
        <begin position="1"/>
        <end position="1010"/>
    </location>
</feature>
<feature type="domain" description="uDENN" evidence="3">
    <location>
        <begin position="13"/>
        <end position="143"/>
    </location>
</feature>
<feature type="domain" description="cDENN" evidence="3">
    <location>
        <begin position="160"/>
        <end position="296"/>
    </location>
</feature>
<feature type="domain" description="dDENN" evidence="3">
    <location>
        <begin position="298"/>
        <end position="375"/>
    </location>
</feature>
<feature type="region of interest" description="Disordered" evidence="4">
    <location>
        <begin position="455"/>
        <end position="554"/>
    </location>
</feature>
<feature type="short sequence motif" description="FXDXF motif" evidence="2">
    <location>
        <begin position="378"/>
        <end position="382"/>
    </location>
</feature>
<feature type="short sequence motif" description="Clathrin box" evidence="2">
    <location>
        <begin position="560"/>
        <end position="569"/>
    </location>
</feature>
<feature type="compositionally biased region" description="Basic and acidic residues" evidence="4">
    <location>
        <begin position="472"/>
        <end position="482"/>
    </location>
</feature>
<feature type="compositionally biased region" description="Basic residues" evidence="4">
    <location>
        <begin position="493"/>
        <end position="502"/>
    </location>
</feature>
<feature type="compositionally biased region" description="Polar residues" evidence="4">
    <location>
        <begin position="509"/>
        <end position="524"/>
    </location>
</feature>
<feature type="compositionally biased region" description="Basic and acidic residues" evidence="4">
    <location>
        <begin position="538"/>
        <end position="548"/>
    </location>
</feature>
<name>DEN1A_XENLA</name>
<keyword id="KW-1003">Cell membrane</keyword>
<keyword id="KW-0966">Cell projection</keyword>
<keyword id="KW-0968">Cytoplasmic vesicle</keyword>
<keyword id="KW-0344">Guanine-nucleotide releasing factor</keyword>
<keyword id="KW-0446">Lipid-binding</keyword>
<keyword id="KW-0472">Membrane</keyword>
<keyword id="KW-0653">Protein transport</keyword>
<keyword id="KW-1185">Reference proteome</keyword>
<keyword id="KW-0770">Synapse</keyword>
<keyword id="KW-0813">Transport</keyword>
<accession>Q68F67</accession>
<sequence>MGSRLKQNPDTTFEVYIEVNRPGSTDEDPELQRIFPEDFSDQEVLQTVTKFCFPFSLDSLTSSHVGQNFTFVLTDIDSKQRFGFCRLSSGAKSCFCILSYLPWFEAFYKLLNILAEYSSKNQDSQRNELLKTLHGHPIPEPGTPMHLSVHSHFTVPDSQELPSIPENRNLTEYFVAVDVNNMLHLYASMLYERRILICCSKLSTLTACIHGSSAMLFPMYWQHVYIPVLPPHLLDYCCAPMPYLIGIHSSLMEKVKGMSLDDVVFLNVDTNTLETPFDDLQNLPNEVVSALKNRIRKMSTTTGDGVARAFLKAQASLFGSYRNALKIEPEEPITFCEETFVSHRSSGLRPFLQNAIQLQLFKQFIDGRLDLLNSGNGFSDVFEEEINMGEYAGSDKLYHQWLSTVKKGSGAFINTMKTRANPAMKTVYKFAKDHAKMGIKEVKNRLKQKDMAENGFSTATEEPLPQISPSSIEKKRGEERRPITVHFGQVRPPRPHVPRRPKSNAVVESRTTAGSSPDQPQQYRTLKESDADGDEAISPEKDSSEATVKEPQSTEVKHVSLLEDIFSNLQTEPPLLSQAKSLEDLRTPKEDHENQFTFDYQRMDLTAQERTRTIPAMKHGHPYNKLWSMGHDDMAIPNKYLQISPERHLTLPSNSTVTPHKDSALTNIEKEVTIASSQGNITIPRPHGRKTPELGIVPPPPAPRGIKLQTAMTDANKQQTGDSSNYHGQITEGSLRELSADNGEKETAGSSTSEILKPVKVSTEVGMNDDDLLSLLDPLKAGRYQTASQPPMGTLPHSFETPCCSSTPLLTSLQSDFVSPAFSHQLGFAPQPAFLHSPLNPFAQALAAEKTASVMGPPMGVFKAPVATALGSHSFLPTPGIYHSPRPLTSALQGSNLFGQISSGTPLNPVIRQSHSLSETQSNMPLMTSIPAGHRTLPMVQSRSKHQDGKPREYPPIPPRPAKLLEPALLPTKSDQPIDPFEDLLNKTKQTVTPASGKVEHLRKQWETFE</sequence>
<protein>
    <recommendedName>
        <fullName>DENN domain-containing protein 1A</fullName>
    </recommendedName>
    <alternativeName>
        <fullName>Connecdenn</fullName>
    </alternativeName>
</protein>
<evidence type="ECO:0000250" key="1">
    <source>
        <dbReference type="UniProtKB" id="Q8K382"/>
    </source>
</evidence>
<evidence type="ECO:0000250" key="2">
    <source>
        <dbReference type="UniProtKB" id="Q8TEH3"/>
    </source>
</evidence>
<evidence type="ECO:0000255" key="3">
    <source>
        <dbReference type="PROSITE-ProRule" id="PRU00304"/>
    </source>
</evidence>
<evidence type="ECO:0000256" key="4">
    <source>
        <dbReference type="SAM" id="MobiDB-lite"/>
    </source>
</evidence>
<reference key="1">
    <citation type="submission" date="2004-08" db="EMBL/GenBank/DDBJ databases">
        <authorList>
            <consortium name="NIH - Xenopus Gene Collection (XGC) project"/>
        </authorList>
    </citation>
    <scope>NUCLEOTIDE SEQUENCE [LARGE SCALE MRNA]</scope>
    <source>
        <tissue>Spleen</tissue>
    </source>
</reference>
<dbReference type="EMBL" id="BC079977">
    <property type="protein sequence ID" value="AAH79977.1"/>
    <property type="molecule type" value="mRNA"/>
</dbReference>
<dbReference type="RefSeq" id="NP_001087471.1">
    <property type="nucleotide sequence ID" value="NM_001094002.1"/>
</dbReference>
<dbReference type="SMR" id="Q68F67"/>
<dbReference type="DNASU" id="447295"/>
<dbReference type="GeneID" id="447295"/>
<dbReference type="KEGG" id="xla:447295"/>
<dbReference type="AGR" id="Xenbase:XB-GENE-5729864"/>
<dbReference type="CTD" id="447295"/>
<dbReference type="Xenbase" id="XB-GENE-5729864">
    <property type="gene designation" value="dennd1a.S"/>
</dbReference>
<dbReference type="OrthoDB" id="206724at2759"/>
<dbReference type="Proteomes" id="UP000186698">
    <property type="component" value="Chromosome 8S"/>
</dbReference>
<dbReference type="Bgee" id="447295">
    <property type="expression patterns" value="Expressed in testis and 18 other cell types or tissues"/>
</dbReference>
<dbReference type="GO" id="GO:0042995">
    <property type="term" value="C:cell projection"/>
    <property type="evidence" value="ECO:0007669"/>
    <property type="project" value="UniProtKB-KW"/>
</dbReference>
<dbReference type="GO" id="GO:0030136">
    <property type="term" value="C:clathrin-coated vesicle"/>
    <property type="evidence" value="ECO:0000250"/>
    <property type="project" value="UniProtKB"/>
</dbReference>
<dbReference type="GO" id="GO:0030665">
    <property type="term" value="C:clathrin-coated vesicle membrane"/>
    <property type="evidence" value="ECO:0000250"/>
    <property type="project" value="UniProtKB"/>
</dbReference>
<dbReference type="GO" id="GO:0005829">
    <property type="term" value="C:cytosol"/>
    <property type="evidence" value="ECO:0000318"/>
    <property type="project" value="GO_Central"/>
</dbReference>
<dbReference type="GO" id="GO:0042734">
    <property type="term" value="C:presynaptic membrane"/>
    <property type="evidence" value="ECO:0007669"/>
    <property type="project" value="UniProtKB-SubCell"/>
</dbReference>
<dbReference type="GO" id="GO:0005085">
    <property type="term" value="F:guanyl-nucleotide exchange factor activity"/>
    <property type="evidence" value="ECO:0000250"/>
    <property type="project" value="UniProtKB"/>
</dbReference>
<dbReference type="GO" id="GO:1901981">
    <property type="term" value="F:phosphatidylinositol phosphate binding"/>
    <property type="evidence" value="ECO:0000250"/>
    <property type="project" value="UniProtKB"/>
</dbReference>
<dbReference type="GO" id="GO:0032266">
    <property type="term" value="F:phosphatidylinositol-3-phosphate binding"/>
    <property type="evidence" value="ECO:0000250"/>
    <property type="project" value="UniProtKB"/>
</dbReference>
<dbReference type="GO" id="GO:0032456">
    <property type="term" value="P:endocytic recycling"/>
    <property type="evidence" value="ECO:0000250"/>
    <property type="project" value="UniProtKB"/>
</dbReference>
<dbReference type="GO" id="GO:0006897">
    <property type="term" value="P:endocytosis"/>
    <property type="evidence" value="ECO:0000250"/>
    <property type="project" value="UniProtKB"/>
</dbReference>
<dbReference type="GO" id="GO:0043547">
    <property type="term" value="P:positive regulation of GTPase activity"/>
    <property type="evidence" value="ECO:0000250"/>
    <property type="project" value="UniProtKB"/>
</dbReference>
<dbReference type="GO" id="GO:0015031">
    <property type="term" value="P:protein transport"/>
    <property type="evidence" value="ECO:0007669"/>
    <property type="project" value="UniProtKB-KW"/>
</dbReference>
<dbReference type="FunFam" id="3.30.450.200:FF:000003">
    <property type="entry name" value="DENN domain containing 1A"/>
    <property type="match status" value="1"/>
</dbReference>
<dbReference type="FunFam" id="3.40.50.11500:FF:000001">
    <property type="entry name" value="Putative DENN domain-containing protein 1A"/>
    <property type="match status" value="1"/>
</dbReference>
<dbReference type="Gene3D" id="3.30.450.200">
    <property type="match status" value="1"/>
</dbReference>
<dbReference type="Gene3D" id="3.40.50.11500">
    <property type="match status" value="1"/>
</dbReference>
<dbReference type="Gene3D" id="6.10.140.1000">
    <property type="match status" value="1"/>
</dbReference>
<dbReference type="InterPro" id="IPR001194">
    <property type="entry name" value="cDENN_dom"/>
</dbReference>
<dbReference type="InterPro" id="IPR005112">
    <property type="entry name" value="dDENN_dom"/>
</dbReference>
<dbReference type="InterPro" id="IPR043153">
    <property type="entry name" value="DENN_C"/>
</dbReference>
<dbReference type="InterPro" id="IPR040032">
    <property type="entry name" value="DENND1A/B/C"/>
</dbReference>
<dbReference type="InterPro" id="IPR037516">
    <property type="entry name" value="Tripartite_DENN"/>
</dbReference>
<dbReference type="InterPro" id="IPR005113">
    <property type="entry name" value="uDENN_dom"/>
</dbReference>
<dbReference type="PANTHER" id="PTHR13196">
    <property type="entry name" value="DENN DOMAIN-CONTAINING"/>
    <property type="match status" value="1"/>
</dbReference>
<dbReference type="PANTHER" id="PTHR13196:SF22">
    <property type="entry name" value="DENN DOMAIN-CONTAINING PROTEIN 1A"/>
    <property type="match status" value="1"/>
</dbReference>
<dbReference type="Pfam" id="PF03455">
    <property type="entry name" value="dDENN"/>
    <property type="match status" value="1"/>
</dbReference>
<dbReference type="Pfam" id="PF02141">
    <property type="entry name" value="DENN"/>
    <property type="match status" value="1"/>
</dbReference>
<dbReference type="Pfam" id="PF03456">
    <property type="entry name" value="uDENN"/>
    <property type="match status" value="1"/>
</dbReference>
<dbReference type="SMART" id="SM00801">
    <property type="entry name" value="dDENN"/>
    <property type="match status" value="1"/>
</dbReference>
<dbReference type="SMART" id="SM00799">
    <property type="entry name" value="DENN"/>
    <property type="match status" value="1"/>
</dbReference>
<dbReference type="SMART" id="SM00800">
    <property type="entry name" value="uDENN"/>
    <property type="match status" value="1"/>
</dbReference>
<dbReference type="PROSITE" id="PS50211">
    <property type="entry name" value="DENN"/>
    <property type="match status" value="1"/>
</dbReference>
<gene>
    <name type="primary">dennd1a</name>
</gene>
<proteinExistence type="evidence at transcript level"/>